<name>ZFP1_ARATH</name>
<dbReference type="EMBL" id="L39644">
    <property type="protein sequence ID" value="AAA87297.1"/>
    <property type="molecule type" value="mRNA"/>
</dbReference>
<dbReference type="EMBL" id="U53501">
    <property type="protein sequence ID" value="AAA98913.1"/>
    <property type="molecule type" value="Genomic_DNA"/>
</dbReference>
<dbReference type="EMBL" id="AC011713">
    <property type="protein sequence ID" value="AAF14661.1"/>
    <property type="molecule type" value="Genomic_DNA"/>
</dbReference>
<dbReference type="EMBL" id="CP002684">
    <property type="protein sequence ID" value="AEE36441.1"/>
    <property type="molecule type" value="Genomic_DNA"/>
</dbReference>
<dbReference type="PIR" id="S55881">
    <property type="entry name" value="S55881"/>
</dbReference>
<dbReference type="RefSeq" id="NP_178188.1">
    <property type="nucleotide sequence ID" value="NM_106721.2"/>
</dbReference>
<dbReference type="SMR" id="Q42485"/>
<dbReference type="BioGRID" id="29630">
    <property type="interactions" value="2"/>
</dbReference>
<dbReference type="IntAct" id="Q42485">
    <property type="interactions" value="2"/>
</dbReference>
<dbReference type="STRING" id="3702.Q42485"/>
<dbReference type="PaxDb" id="3702-AT1G80730.1"/>
<dbReference type="EnsemblPlants" id="AT1G80730.1">
    <property type="protein sequence ID" value="AT1G80730.1"/>
    <property type="gene ID" value="AT1G80730"/>
</dbReference>
<dbReference type="GeneID" id="844412"/>
<dbReference type="Gramene" id="AT1G80730.1">
    <property type="protein sequence ID" value="AT1G80730.1"/>
    <property type="gene ID" value="AT1G80730"/>
</dbReference>
<dbReference type="KEGG" id="ath:AT1G80730"/>
<dbReference type="Araport" id="AT1G80730"/>
<dbReference type="TAIR" id="AT1G80730">
    <property type="gene designation" value="ZFP1"/>
</dbReference>
<dbReference type="eggNOG" id="ENOG502QTKZ">
    <property type="taxonomic scope" value="Eukaryota"/>
</dbReference>
<dbReference type="HOGENOM" id="CLU_1226321_0_0_1"/>
<dbReference type="InParanoid" id="Q42485"/>
<dbReference type="OMA" id="HGSVNNR"/>
<dbReference type="PhylomeDB" id="Q42485"/>
<dbReference type="PRO" id="PR:Q42485"/>
<dbReference type="Proteomes" id="UP000006548">
    <property type="component" value="Chromosome 1"/>
</dbReference>
<dbReference type="ExpressionAtlas" id="Q42485">
    <property type="expression patterns" value="baseline and differential"/>
</dbReference>
<dbReference type="GO" id="GO:0005634">
    <property type="term" value="C:nucleus"/>
    <property type="evidence" value="ECO:0007669"/>
    <property type="project" value="UniProtKB-SubCell"/>
</dbReference>
<dbReference type="GO" id="GO:0003700">
    <property type="term" value="F:DNA-binding transcription factor activity"/>
    <property type="evidence" value="ECO:0000250"/>
    <property type="project" value="TAIR"/>
</dbReference>
<dbReference type="GO" id="GO:0008270">
    <property type="term" value="F:zinc ion binding"/>
    <property type="evidence" value="ECO:0007669"/>
    <property type="project" value="UniProtKB-KW"/>
</dbReference>
<dbReference type="GO" id="GO:0009738">
    <property type="term" value="P:abscisic acid-activated signaling pathway"/>
    <property type="evidence" value="ECO:0007669"/>
    <property type="project" value="UniProtKB-KW"/>
</dbReference>
<dbReference type="GO" id="GO:0009788">
    <property type="term" value="P:negative regulation of abscisic acid-activated signaling pathway"/>
    <property type="evidence" value="ECO:0000315"/>
    <property type="project" value="UniProtKB"/>
</dbReference>
<dbReference type="GO" id="GO:0009640">
    <property type="term" value="P:photomorphogenesis"/>
    <property type="evidence" value="ECO:0000270"/>
    <property type="project" value="TAIR"/>
</dbReference>
<dbReference type="FunFam" id="3.30.160.60:FF:001366">
    <property type="entry name" value="Zinc finger protein 2"/>
    <property type="match status" value="1"/>
</dbReference>
<dbReference type="Gene3D" id="3.30.160.60">
    <property type="entry name" value="Classic Zinc Finger"/>
    <property type="match status" value="1"/>
</dbReference>
<dbReference type="InterPro" id="IPR044246">
    <property type="entry name" value="ZFP3-like"/>
</dbReference>
<dbReference type="InterPro" id="IPR036236">
    <property type="entry name" value="Znf_C2H2_sf"/>
</dbReference>
<dbReference type="InterPro" id="IPR013087">
    <property type="entry name" value="Znf_C2H2_type"/>
</dbReference>
<dbReference type="PANTHER" id="PTHR47287">
    <property type="entry name" value="C2H2 AND C2HC ZINC FINGERS SUPERFAMILY PROTEIN"/>
    <property type="match status" value="1"/>
</dbReference>
<dbReference type="PANTHER" id="PTHR47287:SF15">
    <property type="entry name" value="ZINC FINGER PROTEIN 3-LIKE"/>
    <property type="match status" value="1"/>
</dbReference>
<dbReference type="SUPFAM" id="SSF57667">
    <property type="entry name" value="beta-beta-alpha zinc fingers"/>
    <property type="match status" value="1"/>
</dbReference>
<dbReference type="PROSITE" id="PS00028">
    <property type="entry name" value="ZINC_FINGER_C2H2_1"/>
    <property type="match status" value="1"/>
</dbReference>
<dbReference type="PROSITE" id="PS50157">
    <property type="entry name" value="ZINC_FINGER_C2H2_2"/>
    <property type="match status" value="1"/>
</dbReference>
<keyword id="KW-0938">Abscisic acid signaling pathway</keyword>
<keyword id="KW-0479">Metal-binding</keyword>
<keyword id="KW-0539">Nucleus</keyword>
<keyword id="KW-1185">Reference proteome</keyword>
<keyword id="KW-0862">Zinc</keyword>
<keyword id="KW-0863">Zinc-finger</keyword>
<evidence type="ECO:0000250" key="1">
    <source>
        <dbReference type="UniProtKB" id="Q39261"/>
    </source>
</evidence>
<evidence type="ECO:0000255" key="2">
    <source>
        <dbReference type="PROSITE-ProRule" id="PRU00042"/>
    </source>
</evidence>
<evidence type="ECO:0000269" key="3">
    <source>
    </source>
</evidence>
<evidence type="ECO:0000269" key="4">
    <source>
    </source>
</evidence>
<evidence type="ECO:0000303" key="5">
    <source>
    </source>
</evidence>
<evidence type="ECO:0000303" key="6">
    <source>
    </source>
</evidence>
<evidence type="ECO:0000305" key="7"/>
<evidence type="ECO:0000305" key="8">
    <source>
    </source>
</evidence>
<accession>Q42485</accession>
<reference key="1">
    <citation type="journal article" date="1995" name="Plant Mol. Biol.">
        <title>Characterization of a family of Arabidopsis zinc finger protein cDNAs.</title>
        <authorList>
            <person name="Tague B.W."/>
            <person name="Goodman H.M."/>
        </authorList>
    </citation>
    <scope>NUCLEOTIDE SEQUENCE [MRNA]</scope>
    <source>
        <strain>cv. Landsberg erecta</strain>
        <tissue>Root</tissue>
    </source>
</reference>
<reference key="2">
    <citation type="submission" date="1996-05" db="EMBL/GenBank/DDBJ databases">
        <title>A 37.5 Kb sequence from Arabidopsis thaliana chromosome I.</title>
        <authorList>
            <person name="Goodman H.M."/>
            <person name="Gallant P."/>
            <person name="Keifer-Higgins S."/>
            <person name="Rubenfield M."/>
            <person name="Church G.M."/>
        </authorList>
    </citation>
    <scope>NUCLEOTIDE SEQUENCE [GENOMIC DNA]</scope>
    <source>
        <strain>cv. Columbia</strain>
    </source>
</reference>
<reference key="3">
    <citation type="journal article" date="2000" name="Nature">
        <title>Sequence and analysis of chromosome 1 of the plant Arabidopsis thaliana.</title>
        <authorList>
            <person name="Theologis A."/>
            <person name="Ecker J.R."/>
            <person name="Palm C.J."/>
            <person name="Federspiel N.A."/>
            <person name="Kaul S."/>
            <person name="White O."/>
            <person name="Alonso J."/>
            <person name="Altafi H."/>
            <person name="Araujo R."/>
            <person name="Bowman C.L."/>
            <person name="Brooks S.Y."/>
            <person name="Buehler E."/>
            <person name="Chan A."/>
            <person name="Chao Q."/>
            <person name="Chen H."/>
            <person name="Cheuk R.F."/>
            <person name="Chin C.W."/>
            <person name="Chung M.K."/>
            <person name="Conn L."/>
            <person name="Conway A.B."/>
            <person name="Conway A.R."/>
            <person name="Creasy T.H."/>
            <person name="Dewar K."/>
            <person name="Dunn P."/>
            <person name="Etgu P."/>
            <person name="Feldblyum T.V."/>
            <person name="Feng J.-D."/>
            <person name="Fong B."/>
            <person name="Fujii C.Y."/>
            <person name="Gill J.E."/>
            <person name="Goldsmith A.D."/>
            <person name="Haas B."/>
            <person name="Hansen N.F."/>
            <person name="Hughes B."/>
            <person name="Huizar L."/>
            <person name="Hunter J.L."/>
            <person name="Jenkins J."/>
            <person name="Johnson-Hopson C."/>
            <person name="Khan S."/>
            <person name="Khaykin E."/>
            <person name="Kim C.J."/>
            <person name="Koo H.L."/>
            <person name="Kremenetskaia I."/>
            <person name="Kurtz D.B."/>
            <person name="Kwan A."/>
            <person name="Lam B."/>
            <person name="Langin-Hooper S."/>
            <person name="Lee A."/>
            <person name="Lee J.M."/>
            <person name="Lenz C.A."/>
            <person name="Li J.H."/>
            <person name="Li Y.-P."/>
            <person name="Lin X."/>
            <person name="Liu S.X."/>
            <person name="Liu Z.A."/>
            <person name="Luros J.S."/>
            <person name="Maiti R."/>
            <person name="Marziali A."/>
            <person name="Militscher J."/>
            <person name="Miranda M."/>
            <person name="Nguyen M."/>
            <person name="Nierman W.C."/>
            <person name="Osborne B.I."/>
            <person name="Pai G."/>
            <person name="Peterson J."/>
            <person name="Pham P.K."/>
            <person name="Rizzo M."/>
            <person name="Rooney T."/>
            <person name="Rowley D."/>
            <person name="Sakano H."/>
            <person name="Salzberg S.L."/>
            <person name="Schwartz J.R."/>
            <person name="Shinn P."/>
            <person name="Southwick A.M."/>
            <person name="Sun H."/>
            <person name="Tallon L.J."/>
            <person name="Tambunga G."/>
            <person name="Toriumi M.J."/>
            <person name="Town C.D."/>
            <person name="Utterback T."/>
            <person name="Van Aken S."/>
            <person name="Vaysberg M."/>
            <person name="Vysotskaia V.S."/>
            <person name="Walker M."/>
            <person name="Wu D."/>
            <person name="Yu G."/>
            <person name="Fraser C.M."/>
            <person name="Venter J.C."/>
            <person name="Davis R.W."/>
        </authorList>
    </citation>
    <scope>NUCLEOTIDE SEQUENCE [LARGE SCALE GENOMIC DNA]</scope>
    <source>
        <strain>cv. Columbia</strain>
    </source>
</reference>
<reference key="4">
    <citation type="journal article" date="2017" name="Plant J.">
        <title>Araport11: a complete reannotation of the Arabidopsis thaliana reference genome.</title>
        <authorList>
            <person name="Cheng C.Y."/>
            <person name="Krishnakumar V."/>
            <person name="Chan A.P."/>
            <person name="Thibaud-Nissen F."/>
            <person name="Schobel S."/>
            <person name="Town C.D."/>
        </authorList>
    </citation>
    <scope>GENOME REANNOTATION</scope>
    <source>
        <strain>cv. Columbia</strain>
    </source>
</reference>
<reference key="5">
    <citation type="journal article" date="1996" name="Plant Mol. Biol.">
        <title>Expression analysis of an Arabidopsis C2H2 zinc finger protein gene.</title>
        <authorList>
            <person name="Tague B.W."/>
            <person name="Gallant P."/>
            <person name="Goodman H.M."/>
        </authorList>
    </citation>
    <scope>FUNCTION</scope>
    <scope>TISSUE SPECIFICITY</scope>
</reference>
<reference key="6">
    <citation type="journal article" date="2000" name="Plant Mol. Biol.">
        <title>AtZFP1, encoding Arabidopsis thaliana C2H2 zinc-finger protein 1, is expressed downstream of photomorphogenic activation.</title>
        <authorList>
            <person name="Chrispeels H.E."/>
            <person name="Oettinger H."/>
            <person name="Janvier N."/>
            <person name="Tague B.W."/>
        </authorList>
    </citation>
    <scope>TISSUE SPECIFICITY</scope>
    <scope>INDUCTION BY LIGHT</scope>
</reference>
<reference key="7">
    <citation type="journal article" date="2014" name="Plant Physiol.">
        <title>The Arabidopsis ZINC FINGER PROTEIN3 interferes with abscisic acid and light signaling in seed germination and plant development.</title>
        <authorList>
            <person name="Joseph M.P."/>
            <person name="Papdi C."/>
            <person name="Kozma-Bognar L."/>
            <person name="Nagy I."/>
            <person name="Lopez-Carbonell M."/>
            <person name="Rigo G."/>
            <person name="Koncz C."/>
            <person name="Szabados L."/>
        </authorList>
    </citation>
    <scope>FUNCTION</scope>
</reference>
<comment type="function">
    <text evidence="4 8">May play a role in the regulation of shoot development, downstream of photomorphogenic activation (Probable). Acts as a negative regulator of abscisic acid (ABA) signaling during germination and early seedling development (PubMed:24808098).</text>
</comment>
<comment type="subcellular location">
    <subcellularLocation>
        <location evidence="1">Nucleus</location>
    </subcellularLocation>
</comment>
<comment type="tissue specificity">
    <text evidence="3 8">Highly expressed in the shoot apex, including the apical meristem, developing leaves and developing vascular system.</text>
</comment>
<comment type="induction">
    <text evidence="3">Induced by white light in dark-grown seedlings.</text>
</comment>
<comment type="miscellaneous">
    <text evidence="4">Seeds over-expressing ZFP1 are insensitive to inhibition of germination by abscisic acid (ABA).</text>
</comment>
<organism>
    <name type="scientific">Arabidopsis thaliana</name>
    <name type="common">Mouse-ear cress</name>
    <dbReference type="NCBI Taxonomy" id="3702"/>
    <lineage>
        <taxon>Eukaryota</taxon>
        <taxon>Viridiplantae</taxon>
        <taxon>Streptophyta</taxon>
        <taxon>Embryophyta</taxon>
        <taxon>Tracheophyta</taxon>
        <taxon>Spermatophyta</taxon>
        <taxon>Magnoliopsida</taxon>
        <taxon>eudicotyledons</taxon>
        <taxon>Gunneridae</taxon>
        <taxon>Pentapetalae</taxon>
        <taxon>rosids</taxon>
        <taxon>malvids</taxon>
        <taxon>Brassicales</taxon>
        <taxon>Brassicaceae</taxon>
        <taxon>Camelineae</taxon>
        <taxon>Arabidopsis</taxon>
    </lineage>
</organism>
<sequence length="228" mass="25468">MEPSIKGDQEMLKIKKQGHQDLELGLTLLSRGTATSSELNLIDSFKTSSSSTSHHQHQQEQLADPRVFSCNYCQRKFYSSQALGGHQNAHKRERTLAKRGQYYKMTLSSLPSSAFAFGHGSVSRFASMASLPLHGSVNNRSTLGIQAHSTIHKPSFLGRQTTSLSHVFKQSIHQKPTIGKMLPEKFHLEVAGNNNSNMVAAKLERIGHFKSNQEDHNQFKKIDLTLKL</sequence>
<proteinExistence type="evidence at transcript level"/>
<feature type="chain" id="PRO_0000047842" description="Zinc finger protein 1">
    <location>
        <begin position="1"/>
        <end position="228"/>
    </location>
</feature>
<feature type="zinc finger region" description="C2H2-type" evidence="2">
    <location>
        <begin position="68"/>
        <end position="90"/>
    </location>
</feature>
<gene>
    <name evidence="5" type="primary">ZFP1</name>
    <name type="ordered locus">At1g80730</name>
    <name type="ORF">F23A5.8</name>
</gene>
<protein>
    <recommendedName>
        <fullName evidence="7">Zinc finger protein 1</fullName>
        <shortName evidence="6">AtZFP1</shortName>
    </recommendedName>
</protein>